<sequence>MLIPSKLSRPVRLEHTVVRERLLAKLSGASNYRLALITSPAGYGKTTLISQWAAGKTELGWYSLDEGDNQPERFASYLIAAIQQATGGHCASSEVMAQKRQYASLSSLFAQLFIELAAWPRPLFLVIDDYHLITNPVIHEAMRFFLRHQPDHLTLVVLSRNLPQLGIANLRVREQLLEIGSQQLAFTHQEARQFFDCRLSQPIEPAQSNRLCDDVAGWATALQLIALSARQNTGAVHQSARRLAGINASHLSDYLVDEVLNNVDNDTRQFLLKSALLRSMNDALIARVTGEENGQMRLEEIERQGLFLQRMDDSGEWFSYHPLFGSFLRQRCQWELSTELPDIHRAAAESWMAQGFPSEAIHHALAAGDASMLRDILLNHAWGLFNHSELTLLEQSLKALPWESLLANPRLVLLQAWLMQSQHRYSEVNTLLARAEQEMKGEMDDTLHGEFNALRAQVAINDGDPDEAERLAMVALETLPLANFYSRIVATSVHGEVLHCKGDLTKSLSVMQQTELMARRHDVWHYALWSLIQQSEILFAQGFLQAAWETQEKAFTLIQEQHLEQLPLHEFLLRIRAQLLWAWARLDEAEACARTGMTVLANYQPQQQLQCLALLVQCSLARGDLDNARSHLNRLENLLGNGHYHSDWVSNADKVRVIYWQMTGDKAAAAAWLRQTPKPAFANNHFLQSQWRNIARVQILLGDYEPAEMVLEELNENARSLRLMSDINRNLLLLNQLYWNAGRKSDAQRVLMEALTLANRTGFISHFVIEGEAMAQQLRQLLQLNTLPEIEQHRAQRILRDINQHHRHKFAHFDENFVNKLLNHPEVPELIRTSPLTQREWQVLGLIYSGYSNDQIAGELDVAATTIKTHIRNLYQKLGVAHRQDAVQHAQQLLKMMGYGV</sequence>
<feature type="chain" id="PRO_1000085772" description="HTH-type transcriptional regulator MalT">
    <location>
        <begin position="1"/>
        <end position="901"/>
    </location>
</feature>
<feature type="domain" description="HTH luxR-type" evidence="1">
    <location>
        <begin position="829"/>
        <end position="894"/>
    </location>
</feature>
<feature type="DNA-binding region" description="H-T-H motif" evidence="1">
    <location>
        <begin position="853"/>
        <end position="872"/>
    </location>
</feature>
<feature type="binding site" evidence="1">
    <location>
        <begin position="39"/>
        <end position="46"/>
    </location>
    <ligand>
        <name>ATP</name>
        <dbReference type="ChEBI" id="CHEBI:30616"/>
    </ligand>
</feature>
<comment type="function">
    <text evidence="1">Positively regulates the transcription of the maltose regulon whose gene products are responsible for uptake and catabolism of malto-oligosaccharides. Specifically binds to the promoter region of its target genes, recognizing a short DNA motif called the MalT box.</text>
</comment>
<comment type="activity regulation">
    <text evidence="1">Activated by ATP and maltotriose, which are both required for DNA binding.</text>
</comment>
<comment type="subunit">
    <text evidence="1">Monomer in solution. Oligomerizes to an active state in the presence of the positive effectors ATP and maltotriose.</text>
</comment>
<comment type="similarity">
    <text evidence="1">Belongs to the MalT family.</text>
</comment>
<evidence type="ECO:0000255" key="1">
    <source>
        <dbReference type="HAMAP-Rule" id="MF_01247"/>
    </source>
</evidence>
<dbReference type="EMBL" id="CP000783">
    <property type="protein sequence ID" value="ABU79499.1"/>
    <property type="molecule type" value="Genomic_DNA"/>
</dbReference>
<dbReference type="RefSeq" id="WP_012126376.1">
    <property type="nucleotide sequence ID" value="NC_009778.1"/>
</dbReference>
<dbReference type="SMR" id="A7ME76"/>
<dbReference type="KEGG" id="esa:ESA_04320"/>
<dbReference type="PATRIC" id="fig|290339.8.peg.3847"/>
<dbReference type="HOGENOM" id="CLU_006325_3_0_6"/>
<dbReference type="Proteomes" id="UP000000260">
    <property type="component" value="Chromosome"/>
</dbReference>
<dbReference type="GO" id="GO:0005524">
    <property type="term" value="F:ATP binding"/>
    <property type="evidence" value="ECO:0007669"/>
    <property type="project" value="UniProtKB-UniRule"/>
</dbReference>
<dbReference type="GO" id="GO:0003677">
    <property type="term" value="F:DNA binding"/>
    <property type="evidence" value="ECO:0007669"/>
    <property type="project" value="UniProtKB-KW"/>
</dbReference>
<dbReference type="GO" id="GO:0003700">
    <property type="term" value="F:DNA-binding transcription factor activity"/>
    <property type="evidence" value="ECO:0007669"/>
    <property type="project" value="UniProtKB-UniRule"/>
</dbReference>
<dbReference type="GO" id="GO:0045913">
    <property type="term" value="P:positive regulation of carbohydrate metabolic process"/>
    <property type="evidence" value="ECO:0007669"/>
    <property type="project" value="UniProtKB-UniRule"/>
</dbReference>
<dbReference type="GO" id="GO:0045893">
    <property type="term" value="P:positive regulation of DNA-templated transcription"/>
    <property type="evidence" value="ECO:0007669"/>
    <property type="project" value="UniProtKB-UniRule"/>
</dbReference>
<dbReference type="CDD" id="cd06170">
    <property type="entry name" value="LuxR_C_like"/>
    <property type="match status" value="1"/>
</dbReference>
<dbReference type="FunFam" id="1.10.10.10:FF:000115">
    <property type="entry name" value="HTH-type transcriptional regulator MalT"/>
    <property type="match status" value="1"/>
</dbReference>
<dbReference type="Gene3D" id="1.25.40.10">
    <property type="entry name" value="Tetratricopeptide repeat domain"/>
    <property type="match status" value="1"/>
</dbReference>
<dbReference type="Gene3D" id="1.10.10.10">
    <property type="entry name" value="Winged helix-like DNA-binding domain superfamily/Winged helix DNA-binding domain"/>
    <property type="match status" value="1"/>
</dbReference>
<dbReference type="HAMAP" id="MF_01247">
    <property type="entry name" value="HTH_type_MalT"/>
    <property type="match status" value="1"/>
</dbReference>
<dbReference type="InterPro" id="IPR027417">
    <property type="entry name" value="P-loop_NTPase"/>
</dbReference>
<dbReference type="InterPro" id="IPR016032">
    <property type="entry name" value="Sig_transdc_resp-reg_C-effctor"/>
</dbReference>
<dbReference type="InterPro" id="IPR011990">
    <property type="entry name" value="TPR-like_helical_dom_sf"/>
</dbReference>
<dbReference type="InterPro" id="IPR041617">
    <property type="entry name" value="TPR_MalT"/>
</dbReference>
<dbReference type="InterPro" id="IPR023768">
    <property type="entry name" value="Tscrpt_reg_HTH_MalT"/>
</dbReference>
<dbReference type="InterPro" id="IPR000792">
    <property type="entry name" value="Tscrpt_reg_LuxR_C"/>
</dbReference>
<dbReference type="InterPro" id="IPR036388">
    <property type="entry name" value="WH-like_DNA-bd_sf"/>
</dbReference>
<dbReference type="NCBIfam" id="NF003420">
    <property type="entry name" value="PRK04841.1"/>
    <property type="match status" value="1"/>
</dbReference>
<dbReference type="PANTHER" id="PTHR44688">
    <property type="entry name" value="DNA-BINDING TRANSCRIPTIONAL ACTIVATOR DEVR_DOSR"/>
    <property type="match status" value="1"/>
</dbReference>
<dbReference type="PANTHER" id="PTHR44688:SF16">
    <property type="entry name" value="DNA-BINDING TRANSCRIPTIONAL ACTIVATOR DEVR_DOSR"/>
    <property type="match status" value="1"/>
</dbReference>
<dbReference type="Pfam" id="PF00196">
    <property type="entry name" value="GerE"/>
    <property type="match status" value="1"/>
</dbReference>
<dbReference type="Pfam" id="PF17874">
    <property type="entry name" value="TPR_MalT"/>
    <property type="match status" value="1"/>
</dbReference>
<dbReference type="PRINTS" id="PR00038">
    <property type="entry name" value="HTHLUXR"/>
</dbReference>
<dbReference type="SMART" id="SM00421">
    <property type="entry name" value="HTH_LUXR"/>
    <property type="match status" value="1"/>
</dbReference>
<dbReference type="SUPFAM" id="SSF46894">
    <property type="entry name" value="C-terminal effector domain of the bipartite response regulators"/>
    <property type="match status" value="1"/>
</dbReference>
<dbReference type="SUPFAM" id="SSF52540">
    <property type="entry name" value="P-loop containing nucleoside triphosphate hydrolases"/>
    <property type="match status" value="1"/>
</dbReference>
<dbReference type="SUPFAM" id="SSF48452">
    <property type="entry name" value="TPR-like"/>
    <property type="match status" value="1"/>
</dbReference>
<dbReference type="PROSITE" id="PS00622">
    <property type="entry name" value="HTH_LUXR_1"/>
    <property type="match status" value="1"/>
</dbReference>
<dbReference type="PROSITE" id="PS50043">
    <property type="entry name" value="HTH_LUXR_2"/>
    <property type="match status" value="1"/>
</dbReference>
<keyword id="KW-0010">Activator</keyword>
<keyword id="KW-0067">ATP-binding</keyword>
<keyword id="KW-0119">Carbohydrate metabolism</keyword>
<keyword id="KW-0238">DNA-binding</keyword>
<keyword id="KW-0547">Nucleotide-binding</keyword>
<keyword id="KW-1185">Reference proteome</keyword>
<keyword id="KW-0804">Transcription</keyword>
<keyword id="KW-0805">Transcription regulation</keyword>
<gene>
    <name evidence="1" type="primary">malT</name>
    <name type="ordered locus">ESA_04320</name>
</gene>
<accession>A7ME76</accession>
<proteinExistence type="inferred from homology"/>
<organism>
    <name type="scientific">Cronobacter sakazakii (strain ATCC BAA-894)</name>
    <name type="common">Enterobacter sakazakii</name>
    <dbReference type="NCBI Taxonomy" id="290339"/>
    <lineage>
        <taxon>Bacteria</taxon>
        <taxon>Pseudomonadati</taxon>
        <taxon>Pseudomonadota</taxon>
        <taxon>Gammaproteobacteria</taxon>
        <taxon>Enterobacterales</taxon>
        <taxon>Enterobacteriaceae</taxon>
        <taxon>Cronobacter</taxon>
    </lineage>
</organism>
<reference key="1">
    <citation type="journal article" date="2010" name="PLoS ONE">
        <title>Genome sequence of Cronobacter sakazakii BAA-894 and comparative genomic hybridization analysis with other Cronobacter species.</title>
        <authorList>
            <person name="Kucerova E."/>
            <person name="Clifton S.W."/>
            <person name="Xia X.Q."/>
            <person name="Long F."/>
            <person name="Porwollik S."/>
            <person name="Fulton L."/>
            <person name="Fronick C."/>
            <person name="Minx P."/>
            <person name="Kyung K."/>
            <person name="Warren W."/>
            <person name="Fulton R."/>
            <person name="Feng D."/>
            <person name="Wollam A."/>
            <person name="Shah N."/>
            <person name="Bhonagiri V."/>
            <person name="Nash W.E."/>
            <person name="Hallsworth-Pepin K."/>
            <person name="Wilson R.K."/>
            <person name="McClelland M."/>
            <person name="Forsythe S.J."/>
        </authorList>
    </citation>
    <scope>NUCLEOTIDE SEQUENCE [LARGE SCALE GENOMIC DNA]</scope>
    <source>
        <strain>ATCC BAA-894</strain>
    </source>
</reference>
<name>MALT_CROS8</name>
<protein>
    <recommendedName>
        <fullName evidence="1">HTH-type transcriptional regulator MalT</fullName>
    </recommendedName>
    <alternativeName>
        <fullName evidence="1">ATP-dependent transcriptional activator MalT</fullName>
    </alternativeName>
</protein>